<name>MPAA2_PENBR</name>
<feature type="chain" id="PRO_0000451889" description="Polyprenyl transferase mpaA'">
    <location>
        <begin position="1"/>
        <end position="331"/>
    </location>
</feature>
<feature type="transmembrane region" description="Helical" evidence="2">
    <location>
        <begin position="27"/>
        <end position="47"/>
    </location>
</feature>
<feature type="transmembrane region" description="Helical" evidence="2">
    <location>
        <begin position="56"/>
        <end position="76"/>
    </location>
</feature>
<feature type="transmembrane region" description="Helical" evidence="2">
    <location>
        <begin position="127"/>
        <end position="147"/>
    </location>
</feature>
<feature type="transmembrane region" description="Helical" evidence="2">
    <location>
        <begin position="159"/>
        <end position="179"/>
    </location>
</feature>
<feature type="transmembrane region" description="Helical" evidence="2">
    <location>
        <begin position="190"/>
        <end position="210"/>
    </location>
</feature>
<feature type="transmembrane region" description="Helical" evidence="2">
    <location>
        <begin position="240"/>
        <end position="260"/>
    </location>
</feature>
<feature type="transmembrane region" description="Helical" evidence="2">
    <location>
        <begin position="264"/>
        <end position="284"/>
    </location>
</feature>
<feature type="transmembrane region" description="Helical" evidence="2">
    <location>
        <begin position="295"/>
        <end position="315"/>
    </location>
</feature>
<comment type="function">
    <text evidence="3 6">Polyprenyl transferase; part of the gene cluster that mediates the biosynthesis of mycophenolic acid (MPA), the first isolated antibiotic natural product in the world obtained from a culture of Penicillium brevicompactum in 1893 (PubMed:31209052). MpaA' is a Golgi apparatus-associated enzyme that catalyzes the prenylation of 5,7-dihydroxy-4,6-dimethylphthalide (DHMP) to yield farnesyl-DHMP (FDHMP) (PubMed:31209052). The first step of the pathway is the synthesis of 5-methylorsellinic acid (5MOA) by the cytosolic polyketide synthase mpaC. 5MOA is then converted to the phthalide compound 5,7-dihydroxy-4,6-dimethylphthalide (DHMP) by the endoplasmic reticulum-bound cytochrome P450 monooxygenase mpaDE. MpaDE first catalyzes hydroxylation of 5-MOA to 4,6-dihydroxy-2-(hydroxymethyl)-3-methylbenzoic acid (DHMB). MpaDE then acts as a lactone synthase that catalyzes the ring closure to convert DHMB into DHMP. The next step is the prenylation of DHMP by the Golgi apparatus-associated prenyltransferase mpaA to yield farnesyl-DHMP (FDHMP). The ER-bound oxygenase mpaB then mediates the oxidative cleavage the C19-C20 double bond in FDHMP to yield FDHMP-3C via a mycophenolic aldehyde intermediate. The O-methyltransferase mpaG catalyzes the methylation of FDHMP-3C to yield MFDHMP-3C. After the cytosolic methylation of FDHMP-3C, MFDHMP-3C enters into peroxisomes probably via free diffusion due to its low molecular weight. Upon a peroxisomal CoA ligation reaction, catalyzed by a beta-oxidation component enzyme acyl-CoA ligase ACL891, MFDHMP-3C-CoA would then be restricted to peroxisomes for the following beta-oxidation pathway steps. The peroxisomal beta-oxidation machinery than converts MFDHMP-3C-CoA into MPA_CoA, via a beta-oxidation chain-shortening process. Finally mpaH acts as a peroxisomal acyl-CoA hydrolase with high substrate specificity toward MPA-CoA to release the final product MPA (Probable) (PubMed:31209052).</text>
</comment>
<comment type="catalytic activity">
    <reaction evidence="3">
        <text>5,7-dihydroxy-4-methylphthalide + (2E,6E)-farnesyl diphosphate = 4-farnesyl-3,5-dihydroxy-6-methylphthalide + diphosphate</text>
        <dbReference type="Rhea" id="RHEA:66676"/>
        <dbReference type="ChEBI" id="CHEBI:33019"/>
        <dbReference type="ChEBI" id="CHEBI:68194"/>
        <dbReference type="ChEBI" id="CHEBI:167386"/>
        <dbReference type="ChEBI" id="CHEBI:175763"/>
    </reaction>
    <physiologicalReaction direction="left-to-right" evidence="3">
        <dbReference type="Rhea" id="RHEA:66677"/>
    </physiologicalReaction>
</comment>
<comment type="cofactor">
    <cofactor evidence="1">
        <name>Mg(2+)</name>
        <dbReference type="ChEBI" id="CHEBI:18420"/>
    </cofactor>
</comment>
<comment type="pathway">
    <text evidence="3">Secondary metabolite biosynthesis; terpenoid biosynthesis.</text>
</comment>
<comment type="subcellular location">
    <subcellularLocation>
        <location evidence="3">Golgi apparatus membrane</location>
        <topology evidence="2">Multi-pass membrane protein</topology>
    </subcellularLocation>
    <text evidence="6">Membrane association is functionally relevant because mpaA must ostensibly interact with its membrane-embedded substrate FPP.</text>
</comment>
<comment type="similarity">
    <text evidence="5">Belongs to the UbiA prenyltransferase family.</text>
</comment>
<protein>
    <recommendedName>
        <fullName evidence="4">Polyprenyl transferase mpaA'</fullName>
        <ecNumber evidence="3">2.5.1.-</ecNumber>
    </recommendedName>
    <alternativeName>
        <fullName evidence="4">Mycophenolic acid biosynthesis cluster protein A'</fullName>
    </alternativeName>
</protein>
<keyword id="KW-0333">Golgi apparatus</keyword>
<keyword id="KW-0460">Magnesium</keyword>
<keyword id="KW-0472">Membrane</keyword>
<keyword id="KW-0808">Transferase</keyword>
<keyword id="KW-0812">Transmembrane</keyword>
<keyword id="KW-1133">Transmembrane helix</keyword>
<sequence length="331" mass="37738">MTNAVEDSGPRDLLFLLISTSRFNRYMPYYTMMAAVWATFIAGALKLQQDPESLSIEFILYKAGLCFVHCLLLCGAGNTWNDLVDRDIDARVARTKMRPLASGKVTLTEALLWMTGQYFLSVKMLDLILDGRNIWTLMLPLTASIMLYPYLKRPIFSKVFVYPQYILGLAIGYPAITGWASITGSEEPLGDIIKHCIPICLLVFFWCVYFNTAYSHQDSVDDRKMNINSAYVIAGQRIRLFLAFLSVLPLLTIPYIISTINSPWLWVSWMATWTVSIVMQIAQFDSQKLESGGRIHWDNFLLGLWTIVACMVEVGLQKVEFWKNVEGYIKL</sequence>
<accession>A0A0B5L778</accession>
<organism>
    <name type="scientific">Penicillium brevicompactum</name>
    <dbReference type="NCBI Taxonomy" id="5074"/>
    <lineage>
        <taxon>Eukaryota</taxon>
        <taxon>Fungi</taxon>
        <taxon>Dikarya</taxon>
        <taxon>Ascomycota</taxon>
        <taxon>Pezizomycotina</taxon>
        <taxon>Eurotiomycetes</taxon>
        <taxon>Eurotiomycetidae</taxon>
        <taxon>Eurotiales</taxon>
        <taxon>Aspergillaceae</taxon>
        <taxon>Penicillium</taxon>
    </lineage>
</organism>
<evidence type="ECO:0000250" key="1">
    <source>
        <dbReference type="UniProtKB" id="P32378"/>
    </source>
</evidence>
<evidence type="ECO:0000255" key="2"/>
<evidence type="ECO:0000269" key="3">
    <source>
    </source>
</evidence>
<evidence type="ECO:0000303" key="4">
    <source>
    </source>
</evidence>
<evidence type="ECO:0000305" key="5"/>
<evidence type="ECO:0000305" key="6">
    <source>
    </source>
</evidence>
<gene>
    <name evidence="4" type="primary">mpaA'</name>
</gene>
<reference key="1">
    <citation type="journal article" date="2015" name="ChemBioChem">
        <title>Functional characterization of MpaG', the O-methyltransferase involved in the biosynthesis of mycophenolic acid.</title>
        <authorList>
            <person name="Zhang W."/>
            <person name="Cao S."/>
            <person name="Qiu L."/>
            <person name="Qi F."/>
            <person name="Li Z."/>
            <person name="Yang Y."/>
            <person name="Huang S."/>
            <person name="Bai F."/>
            <person name="Liu C."/>
            <person name="Wan X."/>
            <person name="Li S."/>
        </authorList>
    </citation>
    <scope>NUCLEOTIDE SEQUENCE [GENOMIC DNA]</scope>
    <source>
        <strain>NRRL864</strain>
    </source>
</reference>
<reference key="2">
    <citation type="journal article" date="2019" name="Proc. Natl. Acad. Sci. U.S.A.">
        <title>Compartmentalized biosynthesis of mycophenolic acid.</title>
        <authorList>
            <person name="Zhang W."/>
            <person name="Du L."/>
            <person name="Qu Z."/>
            <person name="Zhang X."/>
            <person name="Li F."/>
            <person name="Li Z."/>
            <person name="Qi F."/>
            <person name="Wang X."/>
            <person name="Jiang Y."/>
            <person name="Men P."/>
            <person name="Sun J."/>
            <person name="Cao S."/>
            <person name="Geng C."/>
            <person name="Qi F."/>
            <person name="Wan X."/>
            <person name="Liu C."/>
            <person name="Li S."/>
        </authorList>
    </citation>
    <scope>FUNCTION</scope>
    <scope>SUBCELLULAR LOCATION</scope>
    <scope>CATALYTIC ACTIVITY</scope>
    <scope>PATHWAY</scope>
</reference>
<dbReference type="EC" id="2.5.1.-" evidence="3"/>
<dbReference type="EMBL" id="KM595305">
    <property type="protein sequence ID" value="AJG44379.1"/>
    <property type="molecule type" value="Genomic_DNA"/>
</dbReference>
<dbReference type="SMR" id="A0A0B5L778"/>
<dbReference type="OrthoDB" id="18170at2759"/>
<dbReference type="UniPathway" id="UPA00213"/>
<dbReference type="GO" id="GO:0005794">
    <property type="term" value="C:Golgi apparatus"/>
    <property type="evidence" value="ECO:0000314"/>
    <property type="project" value="GO_Central"/>
</dbReference>
<dbReference type="GO" id="GO:0000139">
    <property type="term" value="C:Golgi membrane"/>
    <property type="evidence" value="ECO:0007669"/>
    <property type="project" value="UniProtKB-SubCell"/>
</dbReference>
<dbReference type="GO" id="GO:0005886">
    <property type="term" value="C:plasma membrane"/>
    <property type="evidence" value="ECO:0007669"/>
    <property type="project" value="TreeGrafter"/>
</dbReference>
<dbReference type="GO" id="GO:0016218">
    <property type="term" value="F:polyketide synthase activity"/>
    <property type="evidence" value="ECO:0000314"/>
    <property type="project" value="UniProt"/>
</dbReference>
<dbReference type="GO" id="GO:0004659">
    <property type="term" value="F:prenyltransferase activity"/>
    <property type="evidence" value="ECO:0000314"/>
    <property type="project" value="GO_Central"/>
</dbReference>
<dbReference type="GO" id="GO:0140722">
    <property type="term" value="P:mycophenolic acid biosynthetic process"/>
    <property type="evidence" value="ECO:0000314"/>
    <property type="project" value="GO_Central"/>
</dbReference>
<dbReference type="GO" id="GO:0016114">
    <property type="term" value="P:terpenoid biosynthetic process"/>
    <property type="evidence" value="ECO:0007669"/>
    <property type="project" value="UniProtKB-UniPathway"/>
</dbReference>
<dbReference type="CDD" id="cd13959">
    <property type="entry name" value="PT_UbiA_COQ2"/>
    <property type="match status" value="1"/>
</dbReference>
<dbReference type="FunFam" id="1.10.357.140:FF:000008">
    <property type="entry name" value="4-hydroxybenzoate octaprenyltransferase"/>
    <property type="match status" value="1"/>
</dbReference>
<dbReference type="Gene3D" id="1.10.357.140">
    <property type="entry name" value="UbiA prenyltransferase"/>
    <property type="match status" value="1"/>
</dbReference>
<dbReference type="Gene3D" id="1.20.120.1780">
    <property type="entry name" value="UbiA prenyltransferase"/>
    <property type="match status" value="1"/>
</dbReference>
<dbReference type="InterPro" id="IPR039653">
    <property type="entry name" value="Prenyltransferase"/>
</dbReference>
<dbReference type="InterPro" id="IPR000537">
    <property type="entry name" value="UbiA_prenyltransferase"/>
</dbReference>
<dbReference type="InterPro" id="IPR030470">
    <property type="entry name" value="UbiA_prenylTrfase_CS"/>
</dbReference>
<dbReference type="InterPro" id="IPR044878">
    <property type="entry name" value="UbiA_sf"/>
</dbReference>
<dbReference type="PANTHER" id="PTHR11048:SF28">
    <property type="entry name" value="4-HYDROXYBENZOATE POLYPRENYLTRANSFERASE, MITOCHONDRIAL"/>
    <property type="match status" value="1"/>
</dbReference>
<dbReference type="PANTHER" id="PTHR11048">
    <property type="entry name" value="PRENYLTRANSFERASES"/>
    <property type="match status" value="1"/>
</dbReference>
<dbReference type="Pfam" id="PF01040">
    <property type="entry name" value="UbiA"/>
    <property type="match status" value="1"/>
</dbReference>
<dbReference type="PROSITE" id="PS00943">
    <property type="entry name" value="UBIA"/>
    <property type="match status" value="1"/>
</dbReference>
<proteinExistence type="evidence at protein level"/>